<keyword id="KW-0067">ATP-binding</keyword>
<keyword id="KW-0436">Ligase</keyword>
<keyword id="KW-0460">Magnesium</keyword>
<keyword id="KW-0479">Metal-binding</keyword>
<keyword id="KW-0547">Nucleotide-binding</keyword>
<keyword id="KW-1185">Reference proteome</keyword>
<keyword id="KW-0816">Tricarboxylic acid cycle</keyword>
<sequence>MNIHEYQAKALFEKFGVLVPKGAPAKTPEEFVTALAQLPEGMIVVKSQIHAGGRGKGTFTDGFKGGVKVCKSKAEAREAAGKMLGNTLVTAQTGPAGRKVQTIYFNVGSQIKKEYYLAILLDRATSRPVIVASTEGGMEIEKVAHDTPDRIFKVHVDPAYGLADFQVRELVFKLGFTAAEGKNASKLIRALYRCFWENDASMVEVNPLITTPDGQVEALDAKVAFDDNALFRHPELVELRDLNEEDPKEIEASKHELNYIALDGNIACLVNGAGLAMSTMDIIKHFGGTPANFLDVGGGASREQVVAAFKIILGDKNVRGILVNIFGGIMDCNVIAQGIVDAVKEVGLELPLVVRLEGNNVAAGKATLATSGLKLVSGDSMADAAQKIVKLVA</sequence>
<comment type="function">
    <text evidence="1">Succinyl-CoA synthetase functions in the citric acid cycle (TCA), coupling the hydrolysis of succinyl-CoA to the synthesis of either ATP or GTP and thus represents the only step of substrate-level phosphorylation in the TCA. The beta subunit provides nucleotide specificity of the enzyme and binds the substrate succinate, while the binding sites for coenzyme A and phosphate are found in the alpha subunit.</text>
</comment>
<comment type="catalytic activity">
    <reaction evidence="1">
        <text>succinate + ATP + CoA = succinyl-CoA + ADP + phosphate</text>
        <dbReference type="Rhea" id="RHEA:17661"/>
        <dbReference type="ChEBI" id="CHEBI:30031"/>
        <dbReference type="ChEBI" id="CHEBI:30616"/>
        <dbReference type="ChEBI" id="CHEBI:43474"/>
        <dbReference type="ChEBI" id="CHEBI:57287"/>
        <dbReference type="ChEBI" id="CHEBI:57292"/>
        <dbReference type="ChEBI" id="CHEBI:456216"/>
        <dbReference type="EC" id="6.2.1.5"/>
    </reaction>
    <physiologicalReaction direction="right-to-left" evidence="1">
        <dbReference type="Rhea" id="RHEA:17663"/>
    </physiologicalReaction>
</comment>
<comment type="catalytic activity">
    <reaction evidence="1">
        <text>GTP + succinate + CoA = succinyl-CoA + GDP + phosphate</text>
        <dbReference type="Rhea" id="RHEA:22120"/>
        <dbReference type="ChEBI" id="CHEBI:30031"/>
        <dbReference type="ChEBI" id="CHEBI:37565"/>
        <dbReference type="ChEBI" id="CHEBI:43474"/>
        <dbReference type="ChEBI" id="CHEBI:57287"/>
        <dbReference type="ChEBI" id="CHEBI:57292"/>
        <dbReference type="ChEBI" id="CHEBI:58189"/>
    </reaction>
    <physiologicalReaction direction="right-to-left" evidence="1">
        <dbReference type="Rhea" id="RHEA:22122"/>
    </physiologicalReaction>
</comment>
<comment type="cofactor">
    <cofactor evidence="1">
        <name>Mg(2+)</name>
        <dbReference type="ChEBI" id="CHEBI:18420"/>
    </cofactor>
    <text evidence="1">Binds 1 Mg(2+) ion per subunit.</text>
</comment>
<comment type="pathway">
    <text evidence="1">Carbohydrate metabolism; tricarboxylic acid cycle; succinate from succinyl-CoA (ligase route): step 1/1.</text>
</comment>
<comment type="subunit">
    <text evidence="1">Heterotetramer of two alpha and two beta subunits.</text>
</comment>
<comment type="similarity">
    <text evidence="1">Belongs to the succinate/malate CoA ligase beta subunit family.</text>
</comment>
<name>SUCC_OPITP</name>
<reference key="1">
    <citation type="journal article" date="2011" name="J. Bacteriol.">
        <title>Genome sequence of the verrucomicrobium Opitutus terrae PB90-1, an abundant inhabitant of rice paddy soil ecosystems.</title>
        <authorList>
            <person name="van Passel M.W."/>
            <person name="Kant R."/>
            <person name="Palva A."/>
            <person name="Copeland A."/>
            <person name="Lucas S."/>
            <person name="Lapidus A."/>
            <person name="Glavina del Rio T."/>
            <person name="Pitluck S."/>
            <person name="Goltsman E."/>
            <person name="Clum A."/>
            <person name="Sun H."/>
            <person name="Schmutz J."/>
            <person name="Larimer F.W."/>
            <person name="Land M.L."/>
            <person name="Hauser L."/>
            <person name="Kyrpides N."/>
            <person name="Mikhailova N."/>
            <person name="Richardson P.P."/>
            <person name="Janssen P.H."/>
            <person name="de Vos W.M."/>
            <person name="Smidt H."/>
        </authorList>
    </citation>
    <scope>NUCLEOTIDE SEQUENCE [LARGE SCALE GENOMIC DNA]</scope>
    <source>
        <strain>DSM 11246 / JCM 15787 / PB90-1</strain>
    </source>
</reference>
<protein>
    <recommendedName>
        <fullName evidence="1">Succinate--CoA ligase [ADP-forming] subunit beta</fullName>
        <ecNumber evidence="1">6.2.1.5</ecNumber>
    </recommendedName>
    <alternativeName>
        <fullName evidence="1">Succinyl-CoA synthetase subunit beta</fullName>
        <shortName evidence="1">SCS-beta</shortName>
    </alternativeName>
</protein>
<feature type="chain" id="PRO_1000129204" description="Succinate--CoA ligase [ADP-forming] subunit beta">
    <location>
        <begin position="1"/>
        <end position="393"/>
    </location>
</feature>
<feature type="domain" description="ATP-grasp" evidence="1">
    <location>
        <begin position="9"/>
        <end position="251"/>
    </location>
</feature>
<feature type="binding site" evidence="1">
    <location>
        <position position="46"/>
    </location>
    <ligand>
        <name>ATP</name>
        <dbReference type="ChEBI" id="CHEBI:30616"/>
    </ligand>
</feature>
<feature type="binding site" evidence="1">
    <location>
        <begin position="53"/>
        <end position="55"/>
    </location>
    <ligand>
        <name>ATP</name>
        <dbReference type="ChEBI" id="CHEBI:30616"/>
    </ligand>
</feature>
<feature type="binding site" evidence="1">
    <location>
        <position position="109"/>
    </location>
    <ligand>
        <name>ATP</name>
        <dbReference type="ChEBI" id="CHEBI:30616"/>
    </ligand>
</feature>
<feature type="binding site" evidence="1">
    <location>
        <position position="114"/>
    </location>
    <ligand>
        <name>ATP</name>
        <dbReference type="ChEBI" id="CHEBI:30616"/>
    </ligand>
</feature>
<feature type="binding site" evidence="1">
    <location>
        <position position="206"/>
    </location>
    <ligand>
        <name>Mg(2+)</name>
        <dbReference type="ChEBI" id="CHEBI:18420"/>
    </ligand>
</feature>
<feature type="binding site" evidence="1">
    <location>
        <position position="220"/>
    </location>
    <ligand>
        <name>Mg(2+)</name>
        <dbReference type="ChEBI" id="CHEBI:18420"/>
    </ligand>
</feature>
<feature type="binding site" evidence="1">
    <location>
        <position position="271"/>
    </location>
    <ligand>
        <name>substrate</name>
        <note>ligand shared with subunit alpha</note>
    </ligand>
</feature>
<feature type="binding site" evidence="1">
    <location>
        <begin position="328"/>
        <end position="330"/>
    </location>
    <ligand>
        <name>substrate</name>
        <note>ligand shared with subunit alpha</note>
    </ligand>
</feature>
<gene>
    <name evidence="1" type="primary">sucC</name>
    <name type="ordered locus">Oter_4233</name>
</gene>
<dbReference type="EC" id="6.2.1.5" evidence="1"/>
<dbReference type="EMBL" id="CP001032">
    <property type="protein sequence ID" value="ACB77506.1"/>
    <property type="molecule type" value="Genomic_DNA"/>
</dbReference>
<dbReference type="RefSeq" id="WP_012377034.1">
    <property type="nucleotide sequence ID" value="NC_010571.1"/>
</dbReference>
<dbReference type="SMR" id="B1ZP17"/>
<dbReference type="STRING" id="452637.Oter_4233"/>
<dbReference type="KEGG" id="ote:Oter_4233"/>
<dbReference type="eggNOG" id="COG0045">
    <property type="taxonomic scope" value="Bacteria"/>
</dbReference>
<dbReference type="HOGENOM" id="CLU_037430_0_2_0"/>
<dbReference type="OrthoDB" id="9802602at2"/>
<dbReference type="UniPathway" id="UPA00223">
    <property type="reaction ID" value="UER00999"/>
</dbReference>
<dbReference type="Proteomes" id="UP000007013">
    <property type="component" value="Chromosome"/>
</dbReference>
<dbReference type="GO" id="GO:0005829">
    <property type="term" value="C:cytosol"/>
    <property type="evidence" value="ECO:0007669"/>
    <property type="project" value="TreeGrafter"/>
</dbReference>
<dbReference type="GO" id="GO:0042709">
    <property type="term" value="C:succinate-CoA ligase complex"/>
    <property type="evidence" value="ECO:0007669"/>
    <property type="project" value="TreeGrafter"/>
</dbReference>
<dbReference type="GO" id="GO:0005524">
    <property type="term" value="F:ATP binding"/>
    <property type="evidence" value="ECO:0007669"/>
    <property type="project" value="UniProtKB-UniRule"/>
</dbReference>
<dbReference type="GO" id="GO:0000287">
    <property type="term" value="F:magnesium ion binding"/>
    <property type="evidence" value="ECO:0007669"/>
    <property type="project" value="UniProtKB-UniRule"/>
</dbReference>
<dbReference type="GO" id="GO:0004775">
    <property type="term" value="F:succinate-CoA ligase (ADP-forming) activity"/>
    <property type="evidence" value="ECO:0007669"/>
    <property type="project" value="UniProtKB-UniRule"/>
</dbReference>
<dbReference type="GO" id="GO:0004776">
    <property type="term" value="F:succinate-CoA ligase (GDP-forming) activity"/>
    <property type="evidence" value="ECO:0007669"/>
    <property type="project" value="RHEA"/>
</dbReference>
<dbReference type="GO" id="GO:0006104">
    <property type="term" value="P:succinyl-CoA metabolic process"/>
    <property type="evidence" value="ECO:0007669"/>
    <property type="project" value="TreeGrafter"/>
</dbReference>
<dbReference type="GO" id="GO:0006099">
    <property type="term" value="P:tricarboxylic acid cycle"/>
    <property type="evidence" value="ECO:0007669"/>
    <property type="project" value="UniProtKB-UniRule"/>
</dbReference>
<dbReference type="FunFam" id="3.30.1490.20:FF:000002">
    <property type="entry name" value="Succinate--CoA ligase [ADP-forming] subunit beta"/>
    <property type="match status" value="1"/>
</dbReference>
<dbReference type="FunFam" id="3.30.470.20:FF:000002">
    <property type="entry name" value="Succinate--CoA ligase [ADP-forming] subunit beta"/>
    <property type="match status" value="1"/>
</dbReference>
<dbReference type="FunFam" id="3.40.50.261:FF:000001">
    <property type="entry name" value="Succinate--CoA ligase [ADP-forming] subunit beta"/>
    <property type="match status" value="1"/>
</dbReference>
<dbReference type="Gene3D" id="3.30.1490.20">
    <property type="entry name" value="ATP-grasp fold, A domain"/>
    <property type="match status" value="1"/>
</dbReference>
<dbReference type="Gene3D" id="3.30.470.20">
    <property type="entry name" value="ATP-grasp fold, B domain"/>
    <property type="match status" value="1"/>
</dbReference>
<dbReference type="Gene3D" id="3.40.50.261">
    <property type="entry name" value="Succinyl-CoA synthetase domains"/>
    <property type="match status" value="1"/>
</dbReference>
<dbReference type="HAMAP" id="MF_00558">
    <property type="entry name" value="Succ_CoA_beta"/>
    <property type="match status" value="1"/>
</dbReference>
<dbReference type="InterPro" id="IPR013650">
    <property type="entry name" value="ATP-grasp_succ-CoA_synth-type"/>
</dbReference>
<dbReference type="InterPro" id="IPR013815">
    <property type="entry name" value="ATP_grasp_subdomain_1"/>
</dbReference>
<dbReference type="InterPro" id="IPR017866">
    <property type="entry name" value="Succ-CoA_synthase_bsu_CS"/>
</dbReference>
<dbReference type="InterPro" id="IPR005811">
    <property type="entry name" value="SUCC_ACL_C"/>
</dbReference>
<dbReference type="InterPro" id="IPR005809">
    <property type="entry name" value="Succ_CoA_ligase-like_bsu"/>
</dbReference>
<dbReference type="InterPro" id="IPR016102">
    <property type="entry name" value="Succinyl-CoA_synth-like"/>
</dbReference>
<dbReference type="NCBIfam" id="NF001913">
    <property type="entry name" value="PRK00696.1"/>
    <property type="match status" value="1"/>
</dbReference>
<dbReference type="NCBIfam" id="TIGR01016">
    <property type="entry name" value="sucCoAbeta"/>
    <property type="match status" value="1"/>
</dbReference>
<dbReference type="PANTHER" id="PTHR11815:SF10">
    <property type="entry name" value="SUCCINATE--COA LIGASE [GDP-FORMING] SUBUNIT BETA, MITOCHONDRIAL"/>
    <property type="match status" value="1"/>
</dbReference>
<dbReference type="PANTHER" id="PTHR11815">
    <property type="entry name" value="SUCCINYL-COA SYNTHETASE BETA CHAIN"/>
    <property type="match status" value="1"/>
</dbReference>
<dbReference type="Pfam" id="PF08442">
    <property type="entry name" value="ATP-grasp_2"/>
    <property type="match status" value="1"/>
</dbReference>
<dbReference type="Pfam" id="PF00549">
    <property type="entry name" value="Ligase_CoA"/>
    <property type="match status" value="1"/>
</dbReference>
<dbReference type="PIRSF" id="PIRSF001554">
    <property type="entry name" value="SucCS_beta"/>
    <property type="match status" value="1"/>
</dbReference>
<dbReference type="SUPFAM" id="SSF56059">
    <property type="entry name" value="Glutathione synthetase ATP-binding domain-like"/>
    <property type="match status" value="1"/>
</dbReference>
<dbReference type="SUPFAM" id="SSF52210">
    <property type="entry name" value="Succinyl-CoA synthetase domains"/>
    <property type="match status" value="1"/>
</dbReference>
<dbReference type="PROSITE" id="PS01217">
    <property type="entry name" value="SUCCINYL_COA_LIG_3"/>
    <property type="match status" value="1"/>
</dbReference>
<accession>B1ZP17</accession>
<proteinExistence type="inferred from homology"/>
<evidence type="ECO:0000255" key="1">
    <source>
        <dbReference type="HAMAP-Rule" id="MF_00558"/>
    </source>
</evidence>
<organism>
    <name type="scientific">Opitutus terrae (strain DSM 11246 / JCM 15787 / PB90-1)</name>
    <dbReference type="NCBI Taxonomy" id="452637"/>
    <lineage>
        <taxon>Bacteria</taxon>
        <taxon>Pseudomonadati</taxon>
        <taxon>Verrucomicrobiota</taxon>
        <taxon>Opitutia</taxon>
        <taxon>Opitutales</taxon>
        <taxon>Opitutaceae</taxon>
        <taxon>Opitutus</taxon>
    </lineage>
</organism>